<feature type="chain" id="PRO_1000147674" description="UPF0254 protein Mlab_1743">
    <location>
        <begin position="1"/>
        <end position="172"/>
    </location>
</feature>
<protein>
    <recommendedName>
        <fullName evidence="1">UPF0254 protein Mlab_1743</fullName>
    </recommendedName>
</protein>
<gene>
    <name type="ordered locus">Mlab_1743</name>
</gene>
<name>Y1743_METLZ</name>
<proteinExistence type="inferred from homology"/>
<reference key="1">
    <citation type="journal article" date="2009" name="Stand. Genomic Sci.">
        <title>Complete genome sequence of Methanocorpusculum labreanum type strain Z.</title>
        <authorList>
            <person name="Anderson I.J."/>
            <person name="Sieprawska-Lupa M."/>
            <person name="Goltsman E."/>
            <person name="Lapidus A."/>
            <person name="Copeland A."/>
            <person name="Glavina Del Rio T."/>
            <person name="Tice H."/>
            <person name="Dalin E."/>
            <person name="Barry K."/>
            <person name="Pitluck S."/>
            <person name="Hauser L."/>
            <person name="Land M."/>
            <person name="Lucas S."/>
            <person name="Richardson P."/>
            <person name="Whitman W.B."/>
            <person name="Kyrpides N.C."/>
        </authorList>
    </citation>
    <scope>NUCLEOTIDE SEQUENCE [LARGE SCALE GENOMIC DNA]</scope>
    <source>
        <strain>ATCC 43576 / DSM 4855 / Z</strain>
    </source>
</reference>
<sequence length="172" mass="19175">MPTISTAECFTHGKVANELHAFARGYPHEYLFSIDRKKVDISVVAGMFIPTLTGVRTLLHFEPLEPRLVIDTVKVYEQDQDCIMACRMAEAVMRVTGADIGIGTTAGIGKGAVAIASQDKIYSKVTRIDADFRTSDAKKLMQREKSGVFTALRLFEEFLLEGEFPDSYNKYI</sequence>
<keyword id="KW-1185">Reference proteome</keyword>
<accession>A2SU98</accession>
<dbReference type="EMBL" id="CP000559">
    <property type="protein sequence ID" value="ABN07904.1"/>
    <property type="molecule type" value="Genomic_DNA"/>
</dbReference>
<dbReference type="RefSeq" id="WP_011834107.1">
    <property type="nucleotide sequence ID" value="NC_008942.1"/>
</dbReference>
<dbReference type="SMR" id="A2SU98"/>
<dbReference type="STRING" id="410358.Mlab_1743"/>
<dbReference type="GeneID" id="4795502"/>
<dbReference type="KEGG" id="mla:Mlab_1743"/>
<dbReference type="eggNOG" id="arCOG04865">
    <property type="taxonomic scope" value="Archaea"/>
</dbReference>
<dbReference type="HOGENOM" id="CLU_1451416_0_0_2"/>
<dbReference type="OrthoDB" id="59686at2157"/>
<dbReference type="Proteomes" id="UP000000365">
    <property type="component" value="Chromosome"/>
</dbReference>
<dbReference type="HAMAP" id="MF_00673">
    <property type="entry name" value="UPF0254"/>
    <property type="match status" value="1"/>
</dbReference>
<dbReference type="InterPro" id="IPR009625">
    <property type="entry name" value="HcgF"/>
</dbReference>
<dbReference type="NCBIfam" id="NF002122">
    <property type="entry name" value="PRK00962.1"/>
    <property type="match status" value="1"/>
</dbReference>
<dbReference type="Pfam" id="PF06787">
    <property type="entry name" value="HcgF"/>
    <property type="match status" value="1"/>
</dbReference>
<evidence type="ECO:0000255" key="1">
    <source>
        <dbReference type="HAMAP-Rule" id="MF_00673"/>
    </source>
</evidence>
<comment type="similarity">
    <text evidence="1">Belongs to the UPF0254 family.</text>
</comment>
<organism>
    <name type="scientific">Methanocorpusculum labreanum (strain ATCC 43576 / DSM 4855 / Z)</name>
    <dbReference type="NCBI Taxonomy" id="410358"/>
    <lineage>
        <taxon>Archaea</taxon>
        <taxon>Methanobacteriati</taxon>
        <taxon>Methanobacteriota</taxon>
        <taxon>Stenosarchaea group</taxon>
        <taxon>Methanomicrobia</taxon>
        <taxon>Methanomicrobiales</taxon>
        <taxon>Methanocorpusculaceae</taxon>
        <taxon>Methanocorpusculum</taxon>
    </lineage>
</organism>